<evidence type="ECO:0000255" key="1">
    <source>
        <dbReference type="HAMAP-Rule" id="MF_00700"/>
    </source>
</evidence>
<evidence type="ECO:0000269" key="2">
    <source>
    </source>
</evidence>
<evidence type="ECO:0000269" key="3">
    <source>
    </source>
</evidence>
<evidence type="ECO:0000305" key="4">
    <source>
    </source>
</evidence>
<evidence type="ECO:0007829" key="5">
    <source>
        <dbReference type="PDB" id="1G71"/>
    </source>
</evidence>
<name>PRIS_PYRFU</name>
<reference key="1">
    <citation type="journal article" date="2001" name="Curr. Biol.">
        <title>Archaeal primase: bridging the gap between RNA and DNA polymerases.</title>
        <authorList>
            <person name="Bocquier A.A."/>
            <person name="Liu L."/>
            <person name="Cann I.K.O."/>
            <person name="Komori K."/>
            <person name="Kohda D."/>
            <person name="Ishino Y."/>
        </authorList>
    </citation>
    <scope>NUCLEOTIDE SEQUENCE [GENOMIC DNA]</scope>
    <source>
        <strain>ATCC 43587 / DSM 3638 / JCM 8422 / Vc1</strain>
    </source>
</reference>
<reference key="2">
    <citation type="journal article" date="1999" name="Genetics">
        <title>Divergence of the hyperthermophilic archaea Pyrococcus furiosus and P. horikoshii inferred from complete genomic sequences.</title>
        <authorList>
            <person name="Maeder D.L."/>
            <person name="Weiss R.B."/>
            <person name="Dunn D.M."/>
            <person name="Cherry J.L."/>
            <person name="Gonzalez J.M."/>
            <person name="DiRuggiero J."/>
            <person name="Robb F.T."/>
        </authorList>
    </citation>
    <scope>NUCLEOTIDE SEQUENCE [LARGE SCALE GENOMIC DNA]</scope>
    <source>
        <strain>ATCC 43587 / DSM 3638 / JCM 8422 / Vc1</strain>
    </source>
</reference>
<reference key="3">
    <citation type="journal article" date="2001" name="J. Biol. Chem.">
        <title>The archaeal DNA primase: biochemical characterization of the p41-p46 complex from Pyrococcus furiosus.</title>
        <authorList>
            <person name="Liu L."/>
            <person name="Komori K."/>
            <person name="Ishino S."/>
            <person name="Bocquier A.A."/>
            <person name="Cann I.K."/>
            <person name="Kohda D."/>
            <person name="Ishino Y."/>
        </authorList>
    </citation>
    <scope>FUNCTION AS A PRIMASE</scope>
    <scope>SUBUNIT</scope>
</reference>
<reference key="4">
    <citation type="journal article" date="2001" name="Nat. Struct. Biol.">
        <title>Crystal structure of a DNA-dependent RNA polymerase (DNA primase).</title>
        <authorList>
            <person name="Augustin M.A."/>
            <person name="Huber R."/>
            <person name="Kaiser J.T."/>
        </authorList>
    </citation>
    <scope>X-RAY CRYSTALLOGRAPHY (2.30 ANGSTROMS) IN COMPLEX WITH ZINC</scope>
    <scope>ACTIVE SITES</scope>
</reference>
<organism>
    <name type="scientific">Pyrococcus furiosus (strain ATCC 43587 / DSM 3638 / JCM 8422 / Vc1)</name>
    <dbReference type="NCBI Taxonomy" id="186497"/>
    <lineage>
        <taxon>Archaea</taxon>
        <taxon>Methanobacteriati</taxon>
        <taxon>Methanobacteriota</taxon>
        <taxon>Thermococci</taxon>
        <taxon>Thermococcales</taxon>
        <taxon>Thermococcaceae</taxon>
        <taxon>Pyrococcus</taxon>
    </lineage>
</organism>
<sequence>MLMREVTKEERSEFYSKEWSAKKIPKFIVDTLESREFGFDHNGEGPSDRKNQYSDIRDLEDYIRATSPYAVYSSVAFYENPREMEGWRGAELVFDIDAKDLPLKRCNHEPGTVCPICLEDAKELAKDTLIILREELGFENIHVVYSGRGYHIRILDEWALQLDSKSRERILAFISASEIENVEEFRRFLLEKRGWFVLKHGYPRVFRLRLGYFILRVNVPHLLSIGIRRNIAKKILDHKEEIYEGFVRKAILASFPEGVGIESMAKLFALSTRFSKAYFDGRVTVDIKRILRLPSTLHSKVGLIATYVGTKEREVMKFNPFRHAVPKFRKKEVREAYKLWRESLEYE</sequence>
<accession>Q9P9H1</accession>
<proteinExistence type="evidence at protein level"/>
<feature type="chain" id="PRO_0000046750" description="DNA primase small subunit PriS">
    <location>
        <begin position="1"/>
        <end position="347"/>
    </location>
</feature>
<feature type="short sequence motif" description="Zinc knuckle motif">
    <location>
        <begin position="106"/>
        <end position="117"/>
    </location>
</feature>
<feature type="active site" evidence="1 2">
    <location>
        <position position="95"/>
    </location>
</feature>
<feature type="active site" evidence="1 2">
    <location>
        <position position="97"/>
    </location>
</feature>
<feature type="active site" evidence="1 2">
    <location>
        <position position="280"/>
    </location>
</feature>
<feature type="binding site" evidence="2">
    <location>
        <position position="106"/>
    </location>
    <ligand>
        <name>Zn(2+)</name>
        <dbReference type="ChEBI" id="CHEBI:29105"/>
    </ligand>
</feature>
<feature type="binding site" evidence="2">
    <location>
        <position position="108"/>
    </location>
    <ligand>
        <name>Zn(2+)</name>
        <dbReference type="ChEBI" id="CHEBI:29105"/>
    </ligand>
</feature>
<feature type="binding site" evidence="2">
    <location>
        <position position="114"/>
    </location>
    <ligand>
        <name>Zn(2+)</name>
        <dbReference type="ChEBI" id="CHEBI:29105"/>
    </ligand>
</feature>
<feature type="binding site" evidence="2">
    <location>
        <position position="117"/>
    </location>
    <ligand>
        <name>Zn(2+)</name>
        <dbReference type="ChEBI" id="CHEBI:29105"/>
    </ligand>
</feature>
<feature type="helix" evidence="5">
    <location>
        <begin position="8"/>
        <end position="17"/>
    </location>
</feature>
<feature type="helix" evidence="5">
    <location>
        <begin position="21"/>
        <end position="23"/>
    </location>
</feature>
<feature type="helix" evidence="5">
    <location>
        <begin position="26"/>
        <end position="29"/>
    </location>
</feature>
<feature type="helix" evidence="5">
    <location>
        <begin position="30"/>
        <end position="34"/>
    </location>
</feature>
<feature type="strand" evidence="5">
    <location>
        <begin position="37"/>
        <end position="44"/>
    </location>
</feature>
<feature type="strand" evidence="5">
    <location>
        <begin position="48"/>
        <end position="51"/>
    </location>
</feature>
<feature type="helix" evidence="5">
    <location>
        <begin position="56"/>
        <end position="66"/>
    </location>
</feature>
<feature type="strand" evidence="5">
    <location>
        <begin position="69"/>
        <end position="80"/>
    </location>
</feature>
<feature type="helix" evidence="5">
    <location>
        <begin position="81"/>
        <end position="83"/>
    </location>
</feature>
<feature type="strand" evidence="5">
    <location>
        <begin position="85"/>
        <end position="90"/>
    </location>
</feature>
<feature type="strand" evidence="5">
    <location>
        <begin position="92"/>
        <end position="98"/>
    </location>
</feature>
<feature type="helix" evidence="5">
    <location>
        <begin position="115"/>
        <end position="134"/>
    </location>
</feature>
<feature type="strand" evidence="5">
    <location>
        <begin position="140"/>
        <end position="145"/>
    </location>
</feature>
<feature type="strand" evidence="5">
    <location>
        <begin position="147"/>
        <end position="154"/>
    </location>
</feature>
<feature type="helix" evidence="5">
    <location>
        <begin position="157"/>
        <end position="159"/>
    </location>
</feature>
<feature type="helix" evidence="5">
    <location>
        <begin position="164"/>
        <end position="174"/>
    </location>
</feature>
<feature type="helix" evidence="5">
    <location>
        <begin position="182"/>
        <end position="191"/>
    </location>
</feature>
<feature type="helix" evidence="5">
    <location>
        <begin position="193"/>
        <end position="197"/>
    </location>
</feature>
<feature type="strand" evidence="5">
    <location>
        <begin position="199"/>
        <end position="201"/>
    </location>
</feature>
<feature type="helix" evidence="5">
    <location>
        <begin position="202"/>
        <end position="214"/>
    </location>
</feature>
<feature type="helix" evidence="5">
    <location>
        <begin position="219"/>
        <end position="223"/>
    </location>
</feature>
<feature type="turn" evidence="5">
    <location>
        <begin position="224"/>
        <end position="226"/>
    </location>
</feature>
<feature type="helix" evidence="5">
    <location>
        <begin position="229"/>
        <end position="237"/>
    </location>
</feature>
<feature type="helix" evidence="5">
    <location>
        <begin position="239"/>
        <end position="245"/>
    </location>
</feature>
<feature type="turn" evidence="5">
    <location>
        <begin position="246"/>
        <end position="249"/>
    </location>
</feature>
<feature type="helix" evidence="5">
    <location>
        <begin position="261"/>
        <end position="275"/>
    </location>
</feature>
<feature type="helix" evidence="5">
    <location>
        <begin position="281"/>
        <end position="285"/>
    </location>
</feature>
<feature type="strand" evidence="5">
    <location>
        <begin position="290"/>
        <end position="292"/>
    </location>
</feature>
<feature type="strand" evidence="5">
    <location>
        <begin position="296"/>
        <end position="298"/>
    </location>
</feature>
<feature type="turn" evidence="5">
    <location>
        <begin position="299"/>
        <end position="302"/>
    </location>
</feature>
<feature type="strand" evidence="5">
    <location>
        <begin position="306"/>
        <end position="311"/>
    </location>
</feature>
<feature type="helix" evidence="5">
    <location>
        <begin position="312"/>
        <end position="317"/>
    </location>
</feature>
<feature type="helix" evidence="5">
    <location>
        <begin position="320"/>
        <end position="323"/>
    </location>
</feature>
<feature type="helix" evidence="5">
    <location>
        <begin position="327"/>
        <end position="329"/>
    </location>
</feature>
<feature type="helix" evidence="5">
    <location>
        <begin position="330"/>
        <end position="343"/>
    </location>
</feature>
<protein>
    <recommendedName>
        <fullName evidence="1">DNA primase small subunit PriS</fullName>
        <ecNumber evidence="1">2.7.7.-</ecNumber>
    </recommendedName>
    <alternativeName>
        <fullName>DNA primase 41 kDa subunit</fullName>
        <shortName>p41</shortName>
    </alternativeName>
</protein>
<comment type="function">
    <text evidence="1 3">Catalytic subunit of DNA primase, an RNA polymerase that catalyzes the synthesis of short RNA molecules used as primers for DNA polymerase during DNA replication. The small subunit contains the primase catalytic core and has DNA synthesis activity on its own. Binding to the large subunit stabilizes and modulates the activity, increasing the rate of DNA synthesis while decreasing the length of the DNA fragments, and conferring RNA synthesis capability. The DNA polymerase activity may enable DNA primase to also catalyze primer extension after primer synthesis. May also play a role in DNA repair.</text>
</comment>
<comment type="cofactor">
    <cofactor evidence="1">
        <name>Mg(2+)</name>
        <dbReference type="ChEBI" id="CHEBI:18420"/>
    </cofactor>
    <cofactor evidence="1">
        <name>Mn(2+)</name>
        <dbReference type="ChEBI" id="CHEBI:29035"/>
    </cofactor>
</comment>
<comment type="subunit">
    <text evidence="1 2 3">Heterodimer of a small subunit (PriS) and a large subunit (PriL). Both participate in formation of the active center, but the ATP-binding site is exclusively located on the small subunit.</text>
</comment>
<comment type="miscellaneous">
    <text evidence="4">The bound zinc ion is not a cofactor. It is bound to a zinc knuckle motif that may be involved in sequence recognition and the binding of ssDNA (PubMed:11135672).</text>
</comment>
<comment type="similarity">
    <text evidence="1">Belongs to the eukaryotic-type primase small subunit family.</text>
</comment>
<gene>
    <name evidence="1" type="primary">priS</name>
    <name type="synonym">priA</name>
    <name type="ordered locus">PF0110</name>
</gene>
<keyword id="KW-0002">3D-structure</keyword>
<keyword id="KW-0235">DNA replication</keyword>
<keyword id="KW-0240">DNA-directed RNA polymerase</keyword>
<keyword id="KW-0460">Magnesium</keyword>
<keyword id="KW-0464">Manganese</keyword>
<keyword id="KW-0479">Metal-binding</keyword>
<keyword id="KW-0548">Nucleotidyltransferase</keyword>
<keyword id="KW-0639">Primosome</keyword>
<keyword id="KW-1185">Reference proteome</keyword>
<keyword id="KW-0804">Transcription</keyword>
<keyword id="KW-0808">Transferase</keyword>
<keyword id="KW-0862">Zinc</keyword>
<dbReference type="EC" id="2.7.7.-" evidence="1"/>
<dbReference type="EMBL" id="AB037376">
    <property type="protein sequence ID" value="BAB03293.1"/>
    <property type="molecule type" value="Genomic_DNA"/>
</dbReference>
<dbReference type="EMBL" id="AE009950">
    <property type="protein sequence ID" value="AAL80234.1"/>
    <property type="molecule type" value="Genomic_DNA"/>
</dbReference>
<dbReference type="RefSeq" id="WP_011011222.1">
    <property type="nucleotide sequence ID" value="NZ_CP023154.1"/>
</dbReference>
<dbReference type="PDB" id="1G71">
    <property type="method" value="X-ray"/>
    <property type="resolution" value="2.30 A"/>
    <property type="chains" value="A/B=1-347"/>
</dbReference>
<dbReference type="PDBsum" id="1G71"/>
<dbReference type="SMR" id="Q9P9H1"/>
<dbReference type="STRING" id="186497.PF0110"/>
<dbReference type="PaxDb" id="186497-PF0110"/>
<dbReference type="GeneID" id="41711897"/>
<dbReference type="KEGG" id="pfu:PF0110"/>
<dbReference type="PATRIC" id="fig|186497.12.peg.114"/>
<dbReference type="eggNOG" id="arCOG04110">
    <property type="taxonomic scope" value="Archaea"/>
</dbReference>
<dbReference type="HOGENOM" id="CLU_056123_1_0_2"/>
<dbReference type="OrthoDB" id="31125at2157"/>
<dbReference type="PhylomeDB" id="Q9P9H1"/>
<dbReference type="BRENDA" id="2.7.7.102">
    <property type="organism ID" value="5243"/>
</dbReference>
<dbReference type="BRENDA" id="2.7.7.B16">
    <property type="organism ID" value="5243"/>
</dbReference>
<dbReference type="EvolutionaryTrace" id="Q9P9H1"/>
<dbReference type="Proteomes" id="UP000001013">
    <property type="component" value="Chromosome"/>
</dbReference>
<dbReference type="GO" id="GO:0000428">
    <property type="term" value="C:DNA-directed RNA polymerase complex"/>
    <property type="evidence" value="ECO:0007669"/>
    <property type="project" value="UniProtKB-KW"/>
</dbReference>
<dbReference type="GO" id="GO:1990077">
    <property type="term" value="C:primosome complex"/>
    <property type="evidence" value="ECO:0007669"/>
    <property type="project" value="UniProtKB-KW"/>
</dbReference>
<dbReference type="GO" id="GO:0003899">
    <property type="term" value="F:DNA-directed RNA polymerase activity"/>
    <property type="evidence" value="ECO:0007669"/>
    <property type="project" value="InterPro"/>
</dbReference>
<dbReference type="GO" id="GO:0046872">
    <property type="term" value="F:metal ion binding"/>
    <property type="evidence" value="ECO:0007669"/>
    <property type="project" value="UniProtKB-KW"/>
</dbReference>
<dbReference type="GO" id="GO:0006269">
    <property type="term" value="P:DNA replication, synthesis of primer"/>
    <property type="evidence" value="ECO:0007669"/>
    <property type="project" value="UniProtKB-UniRule"/>
</dbReference>
<dbReference type="CDD" id="cd04860">
    <property type="entry name" value="AE_Prim_S"/>
    <property type="match status" value="1"/>
</dbReference>
<dbReference type="Gene3D" id="1.10.8.160">
    <property type="entry name" value="DNA primase S, domain 2"/>
    <property type="match status" value="1"/>
</dbReference>
<dbReference type="Gene3D" id="3.90.920.10">
    <property type="entry name" value="DNA primase, PRIM domain"/>
    <property type="match status" value="1"/>
</dbReference>
<dbReference type="HAMAP" id="MF_00700">
    <property type="entry name" value="DNA_primase_sml_arc"/>
    <property type="match status" value="1"/>
</dbReference>
<dbReference type="InterPro" id="IPR002755">
    <property type="entry name" value="DNA_primase_S"/>
</dbReference>
<dbReference type="InterPro" id="IPR014052">
    <property type="entry name" value="DNA_primase_ssu_euk/arc"/>
</dbReference>
<dbReference type="InterPro" id="IPR023639">
    <property type="entry name" value="DNA_primase_ssu_PriS"/>
</dbReference>
<dbReference type="NCBIfam" id="TIGR00335">
    <property type="entry name" value="primase_sml"/>
    <property type="match status" value="1"/>
</dbReference>
<dbReference type="PANTHER" id="PTHR10536">
    <property type="entry name" value="DNA PRIMASE SMALL SUBUNIT"/>
    <property type="match status" value="1"/>
</dbReference>
<dbReference type="Pfam" id="PF01896">
    <property type="entry name" value="DNA_primase_S"/>
    <property type="match status" value="1"/>
</dbReference>
<dbReference type="SUPFAM" id="SSF56747">
    <property type="entry name" value="Prim-pol domain"/>
    <property type="match status" value="1"/>
</dbReference>